<sequence>MARRESSGGSGGLMSSAGLMRYFEAEESAIKIDPKTVIIAAVASGAFIWILNFTYGRFW</sequence>
<evidence type="ECO:0000255" key="1">
    <source>
        <dbReference type="HAMAP-Rule" id="MF_00751"/>
    </source>
</evidence>
<dbReference type="EMBL" id="AM114193">
    <property type="protein sequence ID" value="CAJ36691.1"/>
    <property type="molecule type" value="Genomic_DNA"/>
</dbReference>
<dbReference type="RefSeq" id="WP_012035860.1">
    <property type="nucleotide sequence ID" value="NC_009464.1"/>
</dbReference>
<dbReference type="STRING" id="351160.RCIX1425"/>
<dbReference type="GeneID" id="5145022"/>
<dbReference type="KEGG" id="rci:RCIX1425"/>
<dbReference type="eggNOG" id="arCOG02957">
    <property type="taxonomic scope" value="Archaea"/>
</dbReference>
<dbReference type="OrthoDB" id="43651at2157"/>
<dbReference type="Proteomes" id="UP000000663">
    <property type="component" value="Chromosome"/>
</dbReference>
<dbReference type="GO" id="GO:0005886">
    <property type="term" value="C:plasma membrane"/>
    <property type="evidence" value="ECO:0007669"/>
    <property type="project" value="UniProtKB-SubCell"/>
</dbReference>
<dbReference type="GO" id="GO:0015031">
    <property type="term" value="P:protein transport"/>
    <property type="evidence" value="ECO:0007669"/>
    <property type="project" value="UniProtKB-UniRule"/>
</dbReference>
<dbReference type="HAMAP" id="MF_00751">
    <property type="entry name" value="SecG"/>
    <property type="match status" value="1"/>
</dbReference>
<dbReference type="InterPro" id="IPR023531">
    <property type="entry name" value="Preprot_translocase_SecG"/>
</dbReference>
<dbReference type="InterPro" id="IPR016482">
    <property type="entry name" value="SecG/Sec61-beta/Sbh"/>
</dbReference>
<dbReference type="NCBIfam" id="NF002318">
    <property type="entry name" value="PRK01253.1"/>
    <property type="match status" value="1"/>
</dbReference>
<dbReference type="Pfam" id="PF03911">
    <property type="entry name" value="Sec61_beta"/>
    <property type="match status" value="1"/>
</dbReference>
<protein>
    <recommendedName>
        <fullName evidence="1">Preprotein translocase subunit SecG</fullName>
    </recommendedName>
    <alternativeName>
        <fullName evidence="1">Protein transport protein Sec61 subunit beta homolog</fullName>
    </alternativeName>
</protein>
<organism>
    <name type="scientific">Methanocella arvoryzae (strain DSM 22066 / NBRC 105507 / MRE50)</name>
    <dbReference type="NCBI Taxonomy" id="351160"/>
    <lineage>
        <taxon>Archaea</taxon>
        <taxon>Methanobacteriati</taxon>
        <taxon>Methanobacteriota</taxon>
        <taxon>Stenosarchaea group</taxon>
        <taxon>Methanomicrobia</taxon>
        <taxon>Methanocellales</taxon>
        <taxon>Methanocellaceae</taxon>
        <taxon>Methanocella</taxon>
    </lineage>
</organism>
<comment type="function">
    <text evidence="1">Involved in protein export. The function of the beta subunit is unknown, but it may be involved in stabilization of the trimeric complex.</text>
</comment>
<comment type="subunit">
    <text evidence="1">Component of the protein translocase complex. Heterotrimer consisting of alpha (SecY), beta (SecG) and gamma (SecE) subunits. Can form oligomers of the heterotrimer.</text>
</comment>
<comment type="subcellular location">
    <subcellularLocation>
        <location evidence="1">Cell membrane</location>
        <topology evidence="1">Single-pass membrane protein</topology>
    </subcellularLocation>
</comment>
<comment type="similarity">
    <text evidence="1">Belongs to the SEC61-beta family.</text>
</comment>
<feature type="chain" id="PRO_1000046583" description="Preprotein translocase subunit SecG">
    <location>
        <begin position="1"/>
        <end position="59"/>
    </location>
</feature>
<feature type="topological domain" description="Cytoplasmic" evidence="1">
    <location>
        <begin position="1"/>
        <end position="33"/>
    </location>
</feature>
<feature type="transmembrane region" description="Helical" evidence="1">
    <location>
        <begin position="34"/>
        <end position="55"/>
    </location>
</feature>
<feature type="topological domain" description="Extracellular" evidence="1">
    <location>
        <begin position="56"/>
        <end position="59"/>
    </location>
</feature>
<proteinExistence type="inferred from homology"/>
<keyword id="KW-1003">Cell membrane</keyword>
<keyword id="KW-0472">Membrane</keyword>
<keyword id="KW-0653">Protein transport</keyword>
<keyword id="KW-1185">Reference proteome</keyword>
<keyword id="KW-0811">Translocation</keyword>
<keyword id="KW-0812">Transmembrane</keyword>
<keyword id="KW-1133">Transmembrane helix</keyword>
<keyword id="KW-0813">Transport</keyword>
<accession>Q0W4K2</accession>
<gene>
    <name evidence="1" type="primary">secG</name>
    <name type="ordered locus">UNCMA_15340</name>
    <name type="ORF">RCIX1425</name>
</gene>
<name>SECG_METAR</name>
<reference key="1">
    <citation type="journal article" date="2006" name="Science">
        <title>Genome of rice cluster I archaea -- the key methane producers in the rice rhizosphere.</title>
        <authorList>
            <person name="Erkel C."/>
            <person name="Kube M."/>
            <person name="Reinhardt R."/>
            <person name="Liesack W."/>
        </authorList>
    </citation>
    <scope>NUCLEOTIDE SEQUENCE [LARGE SCALE GENOMIC DNA]</scope>
    <source>
        <strain>DSM 22066 / NBRC 105507 / MRE50</strain>
    </source>
</reference>